<proteinExistence type="inferred from homology"/>
<gene>
    <name type="ordered locus">At3g24510</name>
    <name type="ORF">MOB24.6</name>
</gene>
<evidence type="ECO:0000250" key="1"/>
<evidence type="ECO:0000255" key="2"/>
<evidence type="ECO:0000305" key="3"/>
<comment type="subcellular location">
    <subcellularLocation>
        <location evidence="1">Secreted</location>
    </subcellularLocation>
</comment>
<comment type="similarity">
    <text evidence="3">Belongs to the DEFL family.</text>
</comment>
<comment type="caution">
    <text evidence="3">Lacks 1 of the 4 disulfide bonds, which are conserved features of the family.</text>
</comment>
<comment type="sequence caution" evidence="3">
    <conflict type="erroneous termination">
        <sequence resource="EMBL-CDS" id="ABK28570"/>
    </conflict>
    <text>Extended C-terminus.</text>
</comment>
<protein>
    <recommendedName>
        <fullName>Defensin-like protein 259</fullName>
    </recommendedName>
</protein>
<sequence length="86" mass="9389">MKNASLKLPLLIFILVITSNLGAEARKLTGVADVIVEGEAASPQYGIIDENDTLNKSPSCKRDIDCTFQCRRGGFCNLILQKCECL</sequence>
<reference key="1">
    <citation type="journal article" date="2000" name="DNA Res.">
        <title>Structural analysis of Arabidopsis thaliana chromosome 3. II. Sequence features of the 4,251,695 bp regions covered by 90 P1, TAC and BAC clones.</title>
        <authorList>
            <person name="Kaneko T."/>
            <person name="Katoh T."/>
            <person name="Sato S."/>
            <person name="Nakamura Y."/>
            <person name="Asamizu E."/>
            <person name="Tabata S."/>
        </authorList>
    </citation>
    <scope>NUCLEOTIDE SEQUENCE [LARGE SCALE GENOMIC DNA]</scope>
    <source>
        <strain>cv. Columbia</strain>
    </source>
</reference>
<reference key="2">
    <citation type="journal article" date="2017" name="Plant J.">
        <title>Araport11: a complete reannotation of the Arabidopsis thaliana reference genome.</title>
        <authorList>
            <person name="Cheng C.Y."/>
            <person name="Krishnakumar V."/>
            <person name="Chan A.P."/>
            <person name="Thibaud-Nissen F."/>
            <person name="Schobel S."/>
            <person name="Town C.D."/>
        </authorList>
    </citation>
    <scope>GENOME REANNOTATION</scope>
    <source>
        <strain>cv. Columbia</strain>
    </source>
</reference>
<reference key="3">
    <citation type="journal article" date="2006" name="Plant Biotechnol. J.">
        <title>Simultaneous high-throughput recombinational cloning of open reading frames in closed and open configurations.</title>
        <authorList>
            <person name="Underwood B.A."/>
            <person name="Vanderhaeghen R."/>
            <person name="Whitford R."/>
            <person name="Town C.D."/>
            <person name="Hilson P."/>
        </authorList>
    </citation>
    <scope>NUCLEOTIDE SEQUENCE [LARGE SCALE MRNA]</scope>
    <source>
        <strain>cv. Columbia</strain>
    </source>
</reference>
<reference key="4">
    <citation type="journal article" date="2005" name="Plant Physiol.">
        <title>Genome organization of more than 300 defensin-like genes in Arabidopsis.</title>
        <authorList>
            <person name="Silverstein K.A.T."/>
            <person name="Graham M.A."/>
            <person name="Paape T.D."/>
            <person name="VandenBosch K.A."/>
        </authorList>
    </citation>
    <scope>GENE FAMILY</scope>
</reference>
<dbReference type="EMBL" id="AB020746">
    <property type="protein sequence ID" value="BAB02000.1"/>
    <property type="molecule type" value="Genomic_DNA"/>
</dbReference>
<dbReference type="EMBL" id="CP002686">
    <property type="protein sequence ID" value="AEE76910.1"/>
    <property type="molecule type" value="Genomic_DNA"/>
</dbReference>
<dbReference type="EMBL" id="DQ446690">
    <property type="protein sequence ID" value="ABE65961.1"/>
    <property type="molecule type" value="mRNA"/>
</dbReference>
<dbReference type="EMBL" id="DQ653103">
    <property type="protein sequence ID" value="ABK28570.1"/>
    <property type="status" value="ALT_SEQ"/>
    <property type="molecule type" value="mRNA"/>
</dbReference>
<dbReference type="RefSeq" id="NP_189094.1">
    <property type="nucleotide sequence ID" value="NM_113361.3"/>
</dbReference>
<dbReference type="SMR" id="Q9LV55"/>
<dbReference type="STRING" id="3702.Q9LV55"/>
<dbReference type="PaxDb" id="3702-AT3G24510.1"/>
<dbReference type="ProteomicsDB" id="224085"/>
<dbReference type="EnsemblPlants" id="AT3G24510.1">
    <property type="protein sequence ID" value="AT3G24510.1"/>
    <property type="gene ID" value="AT3G24510"/>
</dbReference>
<dbReference type="GeneID" id="822044"/>
<dbReference type="Gramene" id="AT3G24510.1">
    <property type="protein sequence ID" value="AT3G24510.1"/>
    <property type="gene ID" value="AT3G24510"/>
</dbReference>
<dbReference type="KEGG" id="ath:AT3G24510"/>
<dbReference type="Araport" id="AT3G24510"/>
<dbReference type="TAIR" id="AT3G24510"/>
<dbReference type="HOGENOM" id="CLU_2530542_0_0_1"/>
<dbReference type="InParanoid" id="Q9LV55"/>
<dbReference type="OMA" id="ILQKCEC"/>
<dbReference type="PhylomeDB" id="Q9LV55"/>
<dbReference type="PRO" id="PR:Q9LV55"/>
<dbReference type="Proteomes" id="UP000006548">
    <property type="component" value="Chromosome 3"/>
</dbReference>
<dbReference type="ExpressionAtlas" id="Q9LV55">
    <property type="expression patterns" value="baseline and differential"/>
</dbReference>
<dbReference type="GO" id="GO:0005576">
    <property type="term" value="C:extracellular region"/>
    <property type="evidence" value="ECO:0007669"/>
    <property type="project" value="UniProtKB-SubCell"/>
</dbReference>
<dbReference type="GO" id="GO:0050832">
    <property type="term" value="P:defense response to fungus"/>
    <property type="evidence" value="ECO:0007669"/>
    <property type="project" value="UniProtKB-KW"/>
</dbReference>
<dbReference type="GO" id="GO:0031640">
    <property type="term" value="P:killing of cells of another organism"/>
    <property type="evidence" value="ECO:0007669"/>
    <property type="project" value="UniProtKB-KW"/>
</dbReference>
<organism>
    <name type="scientific">Arabidopsis thaliana</name>
    <name type="common">Mouse-ear cress</name>
    <dbReference type="NCBI Taxonomy" id="3702"/>
    <lineage>
        <taxon>Eukaryota</taxon>
        <taxon>Viridiplantae</taxon>
        <taxon>Streptophyta</taxon>
        <taxon>Embryophyta</taxon>
        <taxon>Tracheophyta</taxon>
        <taxon>Spermatophyta</taxon>
        <taxon>Magnoliopsida</taxon>
        <taxon>eudicotyledons</taxon>
        <taxon>Gunneridae</taxon>
        <taxon>Pentapetalae</taxon>
        <taxon>rosids</taxon>
        <taxon>malvids</taxon>
        <taxon>Brassicales</taxon>
        <taxon>Brassicaceae</taxon>
        <taxon>Camelineae</taxon>
        <taxon>Arabidopsis</taxon>
    </lineage>
</organism>
<accession>Q9LV55</accession>
<accession>A0MEY0</accession>
<feature type="signal peptide" evidence="2">
    <location>
        <begin position="1"/>
        <end position="25"/>
    </location>
</feature>
<feature type="chain" id="PRO_0000379722" description="Defensin-like protein 259">
    <location>
        <begin position="26"/>
        <end position="86"/>
    </location>
</feature>
<feature type="disulfide bond" evidence="1">
    <location>
        <begin position="60"/>
        <end position="76"/>
    </location>
</feature>
<feature type="disulfide bond" evidence="1">
    <location>
        <begin position="66"/>
        <end position="83"/>
    </location>
</feature>
<feature type="disulfide bond" evidence="1">
    <location>
        <begin position="70"/>
        <end position="85"/>
    </location>
</feature>
<name>DF259_ARATH</name>
<keyword id="KW-0929">Antimicrobial</keyword>
<keyword id="KW-1015">Disulfide bond</keyword>
<keyword id="KW-0295">Fungicide</keyword>
<keyword id="KW-0611">Plant defense</keyword>
<keyword id="KW-1185">Reference proteome</keyword>
<keyword id="KW-0964">Secreted</keyword>
<keyword id="KW-0732">Signal</keyword>